<protein>
    <recommendedName>
        <fullName>Cytochrome b</fullName>
    </recommendedName>
    <alternativeName>
        <fullName>Complex III subunit 3</fullName>
    </alternativeName>
    <alternativeName>
        <fullName>Complex III subunit III</fullName>
    </alternativeName>
    <alternativeName>
        <fullName>Cytochrome b-c1 complex subunit 3</fullName>
    </alternativeName>
    <alternativeName>
        <fullName>Ubiquinol-cytochrome-c reductase complex cytochrome b subunit</fullName>
    </alternativeName>
</protein>
<reference key="1">
    <citation type="journal article" date="2001" name="Mol. Phylogenet. Evol.">
        <title>Molecular systematics of bats of the genus Myotis (Vespertilionidae) suggests deterministic ecomorphological convergences.</title>
        <authorList>
            <person name="Ruedi M."/>
            <person name="Mayer F."/>
        </authorList>
    </citation>
    <scope>NUCLEOTIDE SEQUENCE [GENOMIC DNA]</scope>
    <source>
        <strain>Isolate ER 144</strain>
    </source>
</reference>
<dbReference type="EMBL" id="AF376847">
    <property type="protein sequence ID" value="AAK57666.1"/>
    <property type="molecule type" value="Genomic_DNA"/>
</dbReference>
<dbReference type="SMR" id="Q957B5"/>
<dbReference type="GO" id="GO:0005743">
    <property type="term" value="C:mitochondrial inner membrane"/>
    <property type="evidence" value="ECO:0007669"/>
    <property type="project" value="UniProtKB-SubCell"/>
</dbReference>
<dbReference type="GO" id="GO:0045275">
    <property type="term" value="C:respiratory chain complex III"/>
    <property type="evidence" value="ECO:0007669"/>
    <property type="project" value="InterPro"/>
</dbReference>
<dbReference type="GO" id="GO:0046872">
    <property type="term" value="F:metal ion binding"/>
    <property type="evidence" value="ECO:0007669"/>
    <property type="project" value="UniProtKB-KW"/>
</dbReference>
<dbReference type="GO" id="GO:0008121">
    <property type="term" value="F:ubiquinol-cytochrome-c reductase activity"/>
    <property type="evidence" value="ECO:0007669"/>
    <property type="project" value="InterPro"/>
</dbReference>
<dbReference type="GO" id="GO:0006122">
    <property type="term" value="P:mitochondrial electron transport, ubiquinol to cytochrome c"/>
    <property type="evidence" value="ECO:0007669"/>
    <property type="project" value="TreeGrafter"/>
</dbReference>
<dbReference type="CDD" id="cd00290">
    <property type="entry name" value="cytochrome_b_C"/>
    <property type="match status" value="1"/>
</dbReference>
<dbReference type="CDD" id="cd00284">
    <property type="entry name" value="Cytochrome_b_N"/>
    <property type="match status" value="1"/>
</dbReference>
<dbReference type="FunFam" id="1.20.810.10:FF:000002">
    <property type="entry name" value="Cytochrome b"/>
    <property type="match status" value="1"/>
</dbReference>
<dbReference type="Gene3D" id="1.20.810.10">
    <property type="entry name" value="Cytochrome Bc1 Complex, Chain C"/>
    <property type="match status" value="1"/>
</dbReference>
<dbReference type="InterPro" id="IPR005798">
    <property type="entry name" value="Cyt_b/b6_C"/>
</dbReference>
<dbReference type="InterPro" id="IPR036150">
    <property type="entry name" value="Cyt_b/b6_C_sf"/>
</dbReference>
<dbReference type="InterPro" id="IPR005797">
    <property type="entry name" value="Cyt_b/b6_N"/>
</dbReference>
<dbReference type="InterPro" id="IPR027387">
    <property type="entry name" value="Cytb/b6-like_sf"/>
</dbReference>
<dbReference type="InterPro" id="IPR030689">
    <property type="entry name" value="Cytochrome_b"/>
</dbReference>
<dbReference type="InterPro" id="IPR048260">
    <property type="entry name" value="Cytochrome_b_C_euk/bac"/>
</dbReference>
<dbReference type="InterPro" id="IPR048259">
    <property type="entry name" value="Cytochrome_b_N_euk/bac"/>
</dbReference>
<dbReference type="InterPro" id="IPR016174">
    <property type="entry name" value="Di-haem_cyt_TM"/>
</dbReference>
<dbReference type="PANTHER" id="PTHR19271">
    <property type="entry name" value="CYTOCHROME B"/>
    <property type="match status" value="1"/>
</dbReference>
<dbReference type="PANTHER" id="PTHR19271:SF16">
    <property type="entry name" value="CYTOCHROME B"/>
    <property type="match status" value="1"/>
</dbReference>
<dbReference type="Pfam" id="PF00032">
    <property type="entry name" value="Cytochrom_B_C"/>
    <property type="match status" value="1"/>
</dbReference>
<dbReference type="Pfam" id="PF00033">
    <property type="entry name" value="Cytochrome_B"/>
    <property type="match status" value="1"/>
</dbReference>
<dbReference type="PIRSF" id="PIRSF038885">
    <property type="entry name" value="COB"/>
    <property type="match status" value="1"/>
</dbReference>
<dbReference type="SUPFAM" id="SSF81648">
    <property type="entry name" value="a domain/subunit of cytochrome bc1 complex (Ubiquinol-cytochrome c reductase)"/>
    <property type="match status" value="1"/>
</dbReference>
<dbReference type="SUPFAM" id="SSF81342">
    <property type="entry name" value="Transmembrane di-heme cytochromes"/>
    <property type="match status" value="1"/>
</dbReference>
<dbReference type="PROSITE" id="PS51003">
    <property type="entry name" value="CYTB_CTER"/>
    <property type="match status" value="1"/>
</dbReference>
<dbReference type="PROSITE" id="PS51002">
    <property type="entry name" value="CYTB_NTER"/>
    <property type="match status" value="1"/>
</dbReference>
<feature type="chain" id="PRO_0000061235" description="Cytochrome b">
    <location>
        <begin position="1"/>
        <end position="379"/>
    </location>
</feature>
<feature type="transmembrane region" description="Helical" evidence="2">
    <location>
        <begin position="33"/>
        <end position="53"/>
    </location>
</feature>
<feature type="transmembrane region" description="Helical" evidence="2">
    <location>
        <begin position="77"/>
        <end position="98"/>
    </location>
</feature>
<feature type="transmembrane region" description="Helical" evidence="2">
    <location>
        <begin position="113"/>
        <end position="133"/>
    </location>
</feature>
<feature type="transmembrane region" description="Helical" evidence="2">
    <location>
        <begin position="178"/>
        <end position="198"/>
    </location>
</feature>
<feature type="transmembrane region" description="Helical" evidence="2">
    <location>
        <begin position="226"/>
        <end position="246"/>
    </location>
</feature>
<feature type="transmembrane region" description="Helical" evidence="2">
    <location>
        <begin position="288"/>
        <end position="308"/>
    </location>
</feature>
<feature type="transmembrane region" description="Helical" evidence="2">
    <location>
        <begin position="320"/>
        <end position="340"/>
    </location>
</feature>
<feature type="transmembrane region" description="Helical" evidence="2">
    <location>
        <begin position="347"/>
        <end position="367"/>
    </location>
</feature>
<feature type="binding site" description="axial binding residue" evidence="2">
    <location>
        <position position="83"/>
    </location>
    <ligand>
        <name>heme b</name>
        <dbReference type="ChEBI" id="CHEBI:60344"/>
        <label>b562</label>
    </ligand>
    <ligandPart>
        <name>Fe</name>
        <dbReference type="ChEBI" id="CHEBI:18248"/>
    </ligandPart>
</feature>
<feature type="binding site" description="axial binding residue" evidence="2">
    <location>
        <position position="97"/>
    </location>
    <ligand>
        <name>heme b</name>
        <dbReference type="ChEBI" id="CHEBI:60344"/>
        <label>b566</label>
    </ligand>
    <ligandPart>
        <name>Fe</name>
        <dbReference type="ChEBI" id="CHEBI:18248"/>
    </ligandPart>
</feature>
<feature type="binding site" description="axial binding residue" evidence="2">
    <location>
        <position position="182"/>
    </location>
    <ligand>
        <name>heme b</name>
        <dbReference type="ChEBI" id="CHEBI:60344"/>
        <label>b562</label>
    </ligand>
    <ligandPart>
        <name>Fe</name>
        <dbReference type="ChEBI" id="CHEBI:18248"/>
    </ligandPart>
</feature>
<feature type="binding site" description="axial binding residue" evidence="2">
    <location>
        <position position="196"/>
    </location>
    <ligand>
        <name>heme b</name>
        <dbReference type="ChEBI" id="CHEBI:60344"/>
        <label>b566</label>
    </ligand>
    <ligandPart>
        <name>Fe</name>
        <dbReference type="ChEBI" id="CHEBI:18248"/>
    </ligandPart>
</feature>
<feature type="binding site" evidence="2">
    <location>
        <position position="201"/>
    </location>
    <ligand>
        <name>a ubiquinone</name>
        <dbReference type="ChEBI" id="CHEBI:16389"/>
    </ligand>
</feature>
<accession>Q957B5</accession>
<gene>
    <name type="primary">MT-CYB</name>
    <name type="synonym">COB</name>
    <name type="synonym">CYTB</name>
    <name type="synonym">MTCYB</name>
</gene>
<evidence type="ECO:0000250" key="1"/>
<evidence type="ECO:0000250" key="2">
    <source>
        <dbReference type="UniProtKB" id="P00157"/>
    </source>
</evidence>
<evidence type="ECO:0000255" key="3">
    <source>
        <dbReference type="PROSITE-ProRule" id="PRU00967"/>
    </source>
</evidence>
<evidence type="ECO:0000255" key="4">
    <source>
        <dbReference type="PROSITE-ProRule" id="PRU00968"/>
    </source>
</evidence>
<keyword id="KW-0249">Electron transport</keyword>
<keyword id="KW-0349">Heme</keyword>
<keyword id="KW-0408">Iron</keyword>
<keyword id="KW-0472">Membrane</keyword>
<keyword id="KW-0479">Metal-binding</keyword>
<keyword id="KW-0496">Mitochondrion</keyword>
<keyword id="KW-0999">Mitochondrion inner membrane</keyword>
<keyword id="KW-0679">Respiratory chain</keyword>
<keyword id="KW-0812">Transmembrane</keyword>
<keyword id="KW-1133">Transmembrane helix</keyword>
<keyword id="KW-0813">Transport</keyword>
<keyword id="KW-0830">Ubiquinone</keyword>
<comment type="function">
    <text evidence="2">Component of the ubiquinol-cytochrome c reductase complex (complex III or cytochrome b-c1 complex) that is part of the mitochondrial respiratory chain. The b-c1 complex mediates electron transfer from ubiquinol to cytochrome c. Contributes to the generation of a proton gradient across the mitochondrial membrane that is then used for ATP synthesis.</text>
</comment>
<comment type="cofactor">
    <cofactor evidence="2">
        <name>heme b</name>
        <dbReference type="ChEBI" id="CHEBI:60344"/>
    </cofactor>
    <text evidence="2">Binds 2 heme b groups non-covalently.</text>
</comment>
<comment type="subunit">
    <text evidence="2">The cytochrome bc1 complex contains 11 subunits: 3 respiratory subunits (MT-CYB, CYC1 and UQCRFS1), 2 core proteins (UQCRC1 and UQCRC2) and 6 low-molecular weight proteins (UQCRH/QCR6, UQCRB/QCR7, UQCRQ/QCR8, UQCR10/QCR9, UQCR11/QCR10 and a cleavage product of UQCRFS1). This cytochrome bc1 complex then forms a dimer.</text>
</comment>
<comment type="subcellular location">
    <subcellularLocation>
        <location evidence="2">Mitochondrion inner membrane</location>
        <topology evidence="2">Multi-pass membrane protein</topology>
    </subcellularLocation>
</comment>
<comment type="miscellaneous">
    <text evidence="1">Heme 1 (or BL or b562) is low-potential and absorbs at about 562 nm, and heme 2 (or BH or b566) is high-potential and absorbs at about 566 nm.</text>
</comment>
<comment type="similarity">
    <text evidence="3 4">Belongs to the cytochrome b family.</text>
</comment>
<comment type="caution">
    <text evidence="2">The full-length protein contains only eight transmembrane helices, not nine as predicted by bioinformatics tools.</text>
</comment>
<proteinExistence type="inferred from homology"/>
<sequence>MTNIRKSHPLMKIINSSFIDLPAPSNISSWWNFGSLLGICLALQIMTGLFLAMHYTSDTATAFNSVTHICRDVNYGWILRYLHANGASMFFICLYLHVGRGLYYGSYLYTETWNVGVILLFAVMATAFMGYVLPWGQMSFWGATVITNLLSAIPYIGTDLVEWIWGGFSVDKATLTRFFAFHFLLPFIIAAMVMVHLLFLHETGSNNPMGIPSDTDMIPFHPYYTIKDILGLLLMIMALLLLVLFSPDMLGDPDNYTPANPLNTPPHIKPEWYFLFAYAILRSIPNKLGGVLALIFSILILIIIPLLHTSKQRSMAFRPLSQCLYWLLVADLLALTWIGGQPVEHPFVIIGQLASILYFSIIIILMPLTSLAENHLLKW</sequence>
<organism>
    <name type="scientific">Myotis daubentonii</name>
    <name type="common">Daubenton's bat</name>
    <dbReference type="NCBI Taxonomy" id="98922"/>
    <lineage>
        <taxon>Eukaryota</taxon>
        <taxon>Metazoa</taxon>
        <taxon>Chordata</taxon>
        <taxon>Craniata</taxon>
        <taxon>Vertebrata</taxon>
        <taxon>Euteleostomi</taxon>
        <taxon>Mammalia</taxon>
        <taxon>Eutheria</taxon>
        <taxon>Laurasiatheria</taxon>
        <taxon>Chiroptera</taxon>
        <taxon>Yangochiroptera</taxon>
        <taxon>Vespertilionidae</taxon>
        <taxon>Myotis</taxon>
    </lineage>
</organism>
<name>CYB_MYODA</name>
<geneLocation type="mitochondrion"/>